<sequence>MSGSVWDIEGLLCEDDIPYEQEVAKNPNNLSNWLRYYRFKSSTSSCTFQNRVFILERAVKQLPRSYKLWMIYIDVVLQEVQTSVSYKSKSEILSVNMVFERSLQLLNRAPILWIKYLEFLVETQPYEITLLRRKFNECLYNLPISQHHLIWPLYIRFADDVGGMTGVKVYLKYLQYANPESLQGLNNEQEGELGITIDDIISKLVEFGDVKEASKLFQHILQHTDKFIGLSKSPLQLWIEYIDLLVNSVSKNKRSTVNYNEFDYFFEKLIKDGLQKFPDQIGKFYLKLTFYFIKRKNLFKARYYFDEGLKTCVSVKDFTMIFDSYTEFEENILTNMSEKLEKLGEDSDLNNELDLRMNVFEKLINDRPYLLNDMMLRQDVNNLDEWFKKIVLYKKDSDINMMLDTYAAALRTINPLKAHSLANKKENTLPNLWINYANVYASQNDVKTANLIFSKSVKSQFQSPDDLATLYIEWCELFVKHNDDKKAIEIVEDICTSERGKFDYNDSSIDIHIRVQKSIKLWSFYLDLLESMIENNNQIDEIEKVINAYNITIDLKIATPLTIINFANFLEEWNFYERSFSAYEMGLKIFKDSKIKFEIWNIYLSKIIKHELNIERIRDLFEQCLNESSIEGYNGCPANLCKPVYLLYSQYEQSKGWFTKSVKILQQGLSKLDDGYNQEFYTKAEKDTILRDKFDIYQVLISKILKLNDHNETRKIYEQSLKDNQLTLPNLIQLTMEFINFETELMEFNRVRSLFKYVCQLSNPQSPLIEPIWHNWETFELNHGNEATFKDMLRFKRKIVTEFEKDIILKNSLNPMGFVKSSQGPKVSSIAISAPKEENNPDSIDLDMDM</sequence>
<organism>
    <name type="scientific">Debaryomyces hansenii (strain ATCC 36239 / CBS 767 / BCRC 21394 / JCM 1990 / NBRC 0083 / IGC 2968)</name>
    <name type="common">Yeast</name>
    <name type="synonym">Torulaspora hansenii</name>
    <dbReference type="NCBI Taxonomy" id="284592"/>
    <lineage>
        <taxon>Eukaryota</taxon>
        <taxon>Fungi</taxon>
        <taxon>Dikarya</taxon>
        <taxon>Ascomycota</taxon>
        <taxon>Saccharomycotina</taxon>
        <taxon>Pichiomycetes</taxon>
        <taxon>Debaryomycetaceae</taxon>
        <taxon>Debaryomyces</taxon>
    </lineage>
</organism>
<comment type="function">
    <text evidence="1">Involved in pre-mRNA splicing and cell cycle progression.</text>
</comment>
<comment type="subunit">
    <text evidence="1">Associated with the spliceosome.</text>
</comment>
<comment type="subcellular location">
    <subcellularLocation>
        <location evidence="1">Nucleus</location>
    </subcellularLocation>
</comment>
<comment type="similarity">
    <text evidence="2">Belongs to the crooked-neck family.</text>
</comment>
<protein>
    <recommendedName>
        <fullName>Pre-mRNA-splicing factor SYF1</fullName>
    </recommendedName>
</protein>
<proteinExistence type="inferred from homology"/>
<dbReference type="EMBL" id="CR382137">
    <property type="protein sequence ID" value="CAG87933.2"/>
    <property type="molecule type" value="Genomic_DNA"/>
</dbReference>
<dbReference type="RefSeq" id="XP_459697.2">
    <property type="nucleotide sequence ID" value="XM_459697.1"/>
</dbReference>
<dbReference type="SMR" id="Q6BQ23"/>
<dbReference type="FunCoup" id="Q6BQ23">
    <property type="interactions" value="1112"/>
</dbReference>
<dbReference type="STRING" id="284592.Q6BQ23"/>
<dbReference type="GeneID" id="2902957"/>
<dbReference type="KEGG" id="dha:DEHA2E08954g"/>
<dbReference type="VEuPathDB" id="FungiDB:DEHA2E08954g"/>
<dbReference type="eggNOG" id="KOG2047">
    <property type="taxonomic scope" value="Eukaryota"/>
</dbReference>
<dbReference type="HOGENOM" id="CLU_007736_3_0_1"/>
<dbReference type="InParanoid" id="Q6BQ23"/>
<dbReference type="OMA" id="PDKIKFY"/>
<dbReference type="OrthoDB" id="10067343at2759"/>
<dbReference type="Proteomes" id="UP000000599">
    <property type="component" value="Chromosome E"/>
</dbReference>
<dbReference type="GO" id="GO:0071014">
    <property type="term" value="C:post-mRNA release spliceosomal complex"/>
    <property type="evidence" value="ECO:0007669"/>
    <property type="project" value="EnsemblFungi"/>
</dbReference>
<dbReference type="GO" id="GO:0000974">
    <property type="term" value="C:Prp19 complex"/>
    <property type="evidence" value="ECO:0007669"/>
    <property type="project" value="EnsemblFungi"/>
</dbReference>
<dbReference type="GO" id="GO:0071007">
    <property type="term" value="C:U2-type catalytic step 2 spliceosome"/>
    <property type="evidence" value="ECO:0007669"/>
    <property type="project" value="TreeGrafter"/>
</dbReference>
<dbReference type="GO" id="GO:0000349">
    <property type="term" value="P:generation of catalytic spliceosome for first transesterification step"/>
    <property type="evidence" value="ECO:0007669"/>
    <property type="project" value="TreeGrafter"/>
</dbReference>
<dbReference type="Gene3D" id="1.25.40.10">
    <property type="entry name" value="Tetratricopeptide repeat domain"/>
    <property type="match status" value="4"/>
</dbReference>
<dbReference type="InterPro" id="IPR003107">
    <property type="entry name" value="HAT"/>
</dbReference>
<dbReference type="InterPro" id="IPR055433">
    <property type="entry name" value="HAT_Syf1-like_N"/>
</dbReference>
<dbReference type="InterPro" id="IPR056350">
    <property type="entry name" value="HAT_Syf1_central"/>
</dbReference>
<dbReference type="InterPro" id="IPR055430">
    <property type="entry name" value="HAT_Syf1_CNRKL1_C"/>
</dbReference>
<dbReference type="InterPro" id="IPR045075">
    <property type="entry name" value="Syf1-like"/>
</dbReference>
<dbReference type="InterPro" id="IPR011990">
    <property type="entry name" value="TPR-like_helical_dom_sf"/>
</dbReference>
<dbReference type="PANTHER" id="PTHR11246">
    <property type="entry name" value="PRE-MRNA SPLICING FACTOR"/>
    <property type="match status" value="1"/>
</dbReference>
<dbReference type="PANTHER" id="PTHR11246:SF5">
    <property type="entry name" value="PRE-MRNA-SPLICING FACTOR SYF1"/>
    <property type="match status" value="1"/>
</dbReference>
<dbReference type="Pfam" id="PF23231">
    <property type="entry name" value="HAT_Syf1_CNRKL1_C"/>
    <property type="match status" value="1"/>
</dbReference>
<dbReference type="Pfam" id="PF23233">
    <property type="entry name" value="HAT_Syf1_CNRKL1_N"/>
    <property type="match status" value="1"/>
</dbReference>
<dbReference type="Pfam" id="PF23220">
    <property type="entry name" value="HAT_Syf1_M"/>
    <property type="match status" value="1"/>
</dbReference>
<dbReference type="SMART" id="SM00386">
    <property type="entry name" value="HAT"/>
    <property type="match status" value="10"/>
</dbReference>
<dbReference type="SUPFAM" id="SSF48452">
    <property type="entry name" value="TPR-like"/>
    <property type="match status" value="2"/>
</dbReference>
<gene>
    <name type="primary">SYF1</name>
    <name type="ordered locus">DEHA2E08954g</name>
</gene>
<evidence type="ECO:0000250" key="1"/>
<evidence type="ECO:0000305" key="2"/>
<keyword id="KW-0507">mRNA processing</keyword>
<keyword id="KW-0508">mRNA splicing</keyword>
<keyword id="KW-0539">Nucleus</keyword>
<keyword id="KW-1185">Reference proteome</keyword>
<keyword id="KW-0677">Repeat</keyword>
<keyword id="KW-0747">Spliceosome</keyword>
<accession>Q6BQ23</accession>
<feature type="chain" id="PRO_0000205729" description="Pre-mRNA-splicing factor SYF1">
    <location>
        <begin position="1"/>
        <end position="850"/>
    </location>
</feature>
<feature type="repeat" description="HAT 1">
    <location>
        <begin position="10"/>
        <end position="42"/>
    </location>
</feature>
<feature type="repeat" description="HAT 2">
    <location>
        <begin position="46"/>
        <end position="78"/>
    </location>
</feature>
<feature type="repeat" description="HAT 3">
    <location>
        <begin position="90"/>
        <end position="122"/>
    </location>
</feature>
<feature type="repeat" description="HAT 4">
    <location>
        <begin position="126"/>
        <end position="160"/>
    </location>
</feature>
<feature type="repeat" description="HAT 5">
    <location>
        <begin position="208"/>
        <end position="247"/>
    </location>
</feature>
<feature type="repeat" description="HAT 6">
    <location>
        <begin position="408"/>
        <end position="442"/>
    </location>
</feature>
<feature type="repeat" description="HAT 7">
    <location>
        <begin position="444"/>
        <end position="480"/>
    </location>
</feature>
<feature type="repeat" description="HAT 8">
    <location>
        <begin position="500"/>
        <end position="531"/>
    </location>
</feature>
<feature type="repeat" description="HAT 9">
    <location>
        <begin position="574"/>
        <end position="609"/>
    </location>
</feature>
<feature type="repeat" description="HAT 10">
    <location>
        <begin position="612"/>
        <end position="653"/>
    </location>
</feature>
<feature type="repeat" description="HAT 11">
    <location>
        <begin position="708"/>
        <end position="744"/>
    </location>
</feature>
<feature type="repeat" description="HAT 12">
    <location>
        <begin position="746"/>
        <end position="782"/>
    </location>
</feature>
<reference key="1">
    <citation type="journal article" date="2004" name="Nature">
        <title>Genome evolution in yeasts.</title>
        <authorList>
            <person name="Dujon B."/>
            <person name="Sherman D."/>
            <person name="Fischer G."/>
            <person name="Durrens P."/>
            <person name="Casaregola S."/>
            <person name="Lafontaine I."/>
            <person name="de Montigny J."/>
            <person name="Marck C."/>
            <person name="Neuveglise C."/>
            <person name="Talla E."/>
            <person name="Goffard N."/>
            <person name="Frangeul L."/>
            <person name="Aigle M."/>
            <person name="Anthouard V."/>
            <person name="Babour A."/>
            <person name="Barbe V."/>
            <person name="Barnay S."/>
            <person name="Blanchin S."/>
            <person name="Beckerich J.-M."/>
            <person name="Beyne E."/>
            <person name="Bleykasten C."/>
            <person name="Boisrame A."/>
            <person name="Boyer J."/>
            <person name="Cattolico L."/>
            <person name="Confanioleri F."/>
            <person name="de Daruvar A."/>
            <person name="Despons L."/>
            <person name="Fabre E."/>
            <person name="Fairhead C."/>
            <person name="Ferry-Dumazet H."/>
            <person name="Groppi A."/>
            <person name="Hantraye F."/>
            <person name="Hennequin C."/>
            <person name="Jauniaux N."/>
            <person name="Joyet P."/>
            <person name="Kachouri R."/>
            <person name="Kerrest A."/>
            <person name="Koszul R."/>
            <person name="Lemaire M."/>
            <person name="Lesur I."/>
            <person name="Ma L."/>
            <person name="Muller H."/>
            <person name="Nicaud J.-M."/>
            <person name="Nikolski M."/>
            <person name="Oztas S."/>
            <person name="Ozier-Kalogeropoulos O."/>
            <person name="Pellenz S."/>
            <person name="Potier S."/>
            <person name="Richard G.-F."/>
            <person name="Straub M.-L."/>
            <person name="Suleau A."/>
            <person name="Swennen D."/>
            <person name="Tekaia F."/>
            <person name="Wesolowski-Louvel M."/>
            <person name="Westhof E."/>
            <person name="Wirth B."/>
            <person name="Zeniou-Meyer M."/>
            <person name="Zivanovic Y."/>
            <person name="Bolotin-Fukuhara M."/>
            <person name="Thierry A."/>
            <person name="Bouchier C."/>
            <person name="Caudron B."/>
            <person name="Scarpelli C."/>
            <person name="Gaillardin C."/>
            <person name="Weissenbach J."/>
            <person name="Wincker P."/>
            <person name="Souciet J.-L."/>
        </authorList>
    </citation>
    <scope>NUCLEOTIDE SEQUENCE [LARGE SCALE GENOMIC DNA]</scope>
    <source>
        <strain>ATCC 36239 / CBS 767 / BCRC 21394 / JCM 1990 / NBRC 0083 / IGC 2968</strain>
    </source>
</reference>
<name>SYF1_DEBHA</name>